<protein>
    <recommendedName>
        <fullName evidence="1">Holliday junction branch migration complex subunit RuvB</fullName>
        <ecNumber evidence="1">3.6.4.-</ecNumber>
    </recommendedName>
</protein>
<feature type="chain" id="PRO_0000165574" description="Holliday junction branch migration complex subunit RuvB">
    <location>
        <begin position="1"/>
        <end position="342"/>
    </location>
</feature>
<feature type="region of interest" description="Large ATPase domain (RuvB-L)" evidence="1">
    <location>
        <begin position="1"/>
        <end position="184"/>
    </location>
</feature>
<feature type="region of interest" description="Disordered" evidence="2">
    <location>
        <begin position="1"/>
        <end position="21"/>
    </location>
</feature>
<feature type="region of interest" description="Small ATPAse domain (RuvB-S)" evidence="1">
    <location>
        <begin position="185"/>
        <end position="255"/>
    </location>
</feature>
<feature type="region of interest" description="Head domain (RuvB-H)" evidence="1">
    <location>
        <begin position="258"/>
        <end position="342"/>
    </location>
</feature>
<feature type="binding site" evidence="1">
    <location>
        <position position="23"/>
    </location>
    <ligand>
        <name>ATP</name>
        <dbReference type="ChEBI" id="CHEBI:30616"/>
    </ligand>
</feature>
<feature type="binding site" evidence="1">
    <location>
        <position position="24"/>
    </location>
    <ligand>
        <name>ATP</name>
        <dbReference type="ChEBI" id="CHEBI:30616"/>
    </ligand>
</feature>
<feature type="binding site" evidence="1">
    <location>
        <position position="65"/>
    </location>
    <ligand>
        <name>ATP</name>
        <dbReference type="ChEBI" id="CHEBI:30616"/>
    </ligand>
</feature>
<feature type="binding site" evidence="1">
    <location>
        <position position="68"/>
    </location>
    <ligand>
        <name>ATP</name>
        <dbReference type="ChEBI" id="CHEBI:30616"/>
    </ligand>
</feature>
<feature type="binding site" evidence="1">
    <location>
        <position position="69"/>
    </location>
    <ligand>
        <name>ATP</name>
        <dbReference type="ChEBI" id="CHEBI:30616"/>
    </ligand>
</feature>
<feature type="binding site" evidence="1">
    <location>
        <position position="69"/>
    </location>
    <ligand>
        <name>Mg(2+)</name>
        <dbReference type="ChEBI" id="CHEBI:18420"/>
    </ligand>
</feature>
<feature type="binding site" evidence="1">
    <location>
        <position position="70"/>
    </location>
    <ligand>
        <name>ATP</name>
        <dbReference type="ChEBI" id="CHEBI:30616"/>
    </ligand>
</feature>
<feature type="binding site" evidence="1">
    <location>
        <begin position="131"/>
        <end position="133"/>
    </location>
    <ligand>
        <name>ATP</name>
        <dbReference type="ChEBI" id="CHEBI:30616"/>
    </ligand>
</feature>
<feature type="binding site" evidence="1">
    <location>
        <position position="174"/>
    </location>
    <ligand>
        <name>ATP</name>
        <dbReference type="ChEBI" id="CHEBI:30616"/>
    </ligand>
</feature>
<feature type="binding site" evidence="1">
    <location>
        <position position="184"/>
    </location>
    <ligand>
        <name>ATP</name>
        <dbReference type="ChEBI" id="CHEBI:30616"/>
    </ligand>
</feature>
<feature type="binding site" evidence="1">
    <location>
        <position position="221"/>
    </location>
    <ligand>
        <name>ATP</name>
        <dbReference type="ChEBI" id="CHEBI:30616"/>
    </ligand>
</feature>
<feature type="binding site" evidence="1">
    <location>
        <position position="313"/>
    </location>
    <ligand>
        <name>DNA</name>
        <dbReference type="ChEBI" id="CHEBI:16991"/>
    </ligand>
</feature>
<feature type="binding site" evidence="1">
    <location>
        <position position="318"/>
    </location>
    <ligand>
        <name>DNA</name>
        <dbReference type="ChEBI" id="CHEBI:16991"/>
    </ligand>
</feature>
<keyword id="KW-0067">ATP-binding</keyword>
<keyword id="KW-0963">Cytoplasm</keyword>
<keyword id="KW-0227">DNA damage</keyword>
<keyword id="KW-0233">DNA recombination</keyword>
<keyword id="KW-0234">DNA repair</keyword>
<keyword id="KW-0238">DNA-binding</keyword>
<keyword id="KW-0378">Hydrolase</keyword>
<keyword id="KW-0547">Nucleotide-binding</keyword>
<sequence length="342" mass="36406">MSVEHSPVDPSAEPPEKAEEAALRPGALAEFGGQQRVADQLGLVLAASKSRGTTPDHVLLSGPPGLGKTTLAMIIASEMSAPIRISSGPAIQHAGDLAAILSSLVPGEVFFLDEIHRMSKPAEEMLYLAMEDFRVDVVVGKGPGATAIPIEIPPFTLVGATTRAGLLPGPLRDRFGFTAQLDYYEVADLERIVTRSAGVIGVELAEGAAHTIASRSRGTPRIANRLLRRVRDWADVHHESPVTPQGAETALDLYEVDPLGLDRLDRAVLHAVCLKFGGGPVGLSTLAISVGEEPQTVEEVAEPFLVRLGFLMRTPRGRVPTDRAWRHLGLEPPPDSSGEGLF</sequence>
<evidence type="ECO:0000255" key="1">
    <source>
        <dbReference type="HAMAP-Rule" id="MF_00016"/>
    </source>
</evidence>
<evidence type="ECO:0000256" key="2">
    <source>
        <dbReference type="SAM" id="MobiDB-lite"/>
    </source>
</evidence>
<accession>Q6A8K7</accession>
<dbReference type="EC" id="3.6.4.-" evidence="1"/>
<dbReference type="EMBL" id="AE017283">
    <property type="protein sequence ID" value="AAT82909.1"/>
    <property type="molecule type" value="Genomic_DNA"/>
</dbReference>
<dbReference type="RefSeq" id="WP_002531370.1">
    <property type="nucleotide sequence ID" value="NZ_CP025935.1"/>
</dbReference>
<dbReference type="SMR" id="Q6A8K7"/>
<dbReference type="EnsemblBacteria" id="AAT82909">
    <property type="protein sequence ID" value="AAT82909"/>
    <property type="gene ID" value="PPA1160"/>
</dbReference>
<dbReference type="KEGG" id="pac:PPA1160"/>
<dbReference type="PATRIC" id="fig|267747.3.peg.1196"/>
<dbReference type="eggNOG" id="COG2255">
    <property type="taxonomic scope" value="Bacteria"/>
</dbReference>
<dbReference type="HOGENOM" id="CLU_055599_1_0_11"/>
<dbReference type="Proteomes" id="UP000000603">
    <property type="component" value="Chromosome"/>
</dbReference>
<dbReference type="GO" id="GO:0005737">
    <property type="term" value="C:cytoplasm"/>
    <property type="evidence" value="ECO:0007669"/>
    <property type="project" value="UniProtKB-SubCell"/>
</dbReference>
<dbReference type="GO" id="GO:0048476">
    <property type="term" value="C:Holliday junction resolvase complex"/>
    <property type="evidence" value="ECO:0007669"/>
    <property type="project" value="UniProtKB-UniRule"/>
</dbReference>
<dbReference type="GO" id="GO:0005524">
    <property type="term" value="F:ATP binding"/>
    <property type="evidence" value="ECO:0007669"/>
    <property type="project" value="UniProtKB-UniRule"/>
</dbReference>
<dbReference type="GO" id="GO:0016887">
    <property type="term" value="F:ATP hydrolysis activity"/>
    <property type="evidence" value="ECO:0007669"/>
    <property type="project" value="InterPro"/>
</dbReference>
<dbReference type="GO" id="GO:0000400">
    <property type="term" value="F:four-way junction DNA binding"/>
    <property type="evidence" value="ECO:0007669"/>
    <property type="project" value="UniProtKB-UniRule"/>
</dbReference>
<dbReference type="GO" id="GO:0009378">
    <property type="term" value="F:four-way junction helicase activity"/>
    <property type="evidence" value="ECO:0007669"/>
    <property type="project" value="InterPro"/>
</dbReference>
<dbReference type="GO" id="GO:0006310">
    <property type="term" value="P:DNA recombination"/>
    <property type="evidence" value="ECO:0007669"/>
    <property type="project" value="UniProtKB-UniRule"/>
</dbReference>
<dbReference type="GO" id="GO:0006281">
    <property type="term" value="P:DNA repair"/>
    <property type="evidence" value="ECO:0007669"/>
    <property type="project" value="UniProtKB-UniRule"/>
</dbReference>
<dbReference type="CDD" id="cd00009">
    <property type="entry name" value="AAA"/>
    <property type="match status" value="1"/>
</dbReference>
<dbReference type="Gene3D" id="1.10.8.60">
    <property type="match status" value="1"/>
</dbReference>
<dbReference type="Gene3D" id="3.40.50.300">
    <property type="entry name" value="P-loop containing nucleotide triphosphate hydrolases"/>
    <property type="match status" value="1"/>
</dbReference>
<dbReference type="Gene3D" id="1.10.10.10">
    <property type="entry name" value="Winged helix-like DNA-binding domain superfamily/Winged helix DNA-binding domain"/>
    <property type="match status" value="1"/>
</dbReference>
<dbReference type="HAMAP" id="MF_00016">
    <property type="entry name" value="DNA_HJ_migration_RuvB"/>
    <property type="match status" value="1"/>
</dbReference>
<dbReference type="InterPro" id="IPR003593">
    <property type="entry name" value="AAA+_ATPase"/>
</dbReference>
<dbReference type="InterPro" id="IPR041445">
    <property type="entry name" value="AAA_lid_4"/>
</dbReference>
<dbReference type="InterPro" id="IPR004605">
    <property type="entry name" value="DNA_helicase_Holl-junc_RuvB"/>
</dbReference>
<dbReference type="InterPro" id="IPR027417">
    <property type="entry name" value="P-loop_NTPase"/>
</dbReference>
<dbReference type="InterPro" id="IPR008824">
    <property type="entry name" value="RuvB-like_N"/>
</dbReference>
<dbReference type="InterPro" id="IPR008823">
    <property type="entry name" value="RuvB_C"/>
</dbReference>
<dbReference type="InterPro" id="IPR036388">
    <property type="entry name" value="WH-like_DNA-bd_sf"/>
</dbReference>
<dbReference type="InterPro" id="IPR036390">
    <property type="entry name" value="WH_DNA-bd_sf"/>
</dbReference>
<dbReference type="NCBIfam" id="NF000868">
    <property type="entry name" value="PRK00080.1"/>
    <property type="match status" value="1"/>
</dbReference>
<dbReference type="NCBIfam" id="TIGR00635">
    <property type="entry name" value="ruvB"/>
    <property type="match status" value="1"/>
</dbReference>
<dbReference type="PANTHER" id="PTHR42848">
    <property type="match status" value="1"/>
</dbReference>
<dbReference type="PANTHER" id="PTHR42848:SF1">
    <property type="entry name" value="HOLLIDAY JUNCTION BRANCH MIGRATION COMPLEX SUBUNIT RUVB"/>
    <property type="match status" value="1"/>
</dbReference>
<dbReference type="Pfam" id="PF17864">
    <property type="entry name" value="AAA_lid_4"/>
    <property type="match status" value="1"/>
</dbReference>
<dbReference type="Pfam" id="PF05491">
    <property type="entry name" value="RuvB_C"/>
    <property type="match status" value="1"/>
</dbReference>
<dbReference type="Pfam" id="PF05496">
    <property type="entry name" value="RuvB_N"/>
    <property type="match status" value="1"/>
</dbReference>
<dbReference type="SMART" id="SM00382">
    <property type="entry name" value="AAA"/>
    <property type="match status" value="1"/>
</dbReference>
<dbReference type="SUPFAM" id="SSF52540">
    <property type="entry name" value="P-loop containing nucleoside triphosphate hydrolases"/>
    <property type="match status" value="1"/>
</dbReference>
<dbReference type="SUPFAM" id="SSF46785">
    <property type="entry name" value="Winged helix' DNA-binding domain"/>
    <property type="match status" value="1"/>
</dbReference>
<proteinExistence type="inferred from homology"/>
<reference key="1">
    <citation type="journal article" date="2004" name="Science">
        <title>The complete genome sequence of Propionibacterium acnes, a commensal of human skin.</title>
        <authorList>
            <person name="Brueggemann H."/>
            <person name="Henne A."/>
            <person name="Hoster F."/>
            <person name="Liesegang H."/>
            <person name="Wiezer A."/>
            <person name="Strittmatter A."/>
            <person name="Hujer S."/>
            <person name="Duerre P."/>
            <person name="Gottschalk G."/>
        </authorList>
    </citation>
    <scope>NUCLEOTIDE SEQUENCE [LARGE SCALE GENOMIC DNA]</scope>
    <source>
        <strain>DSM 16379 / KPA171202</strain>
    </source>
</reference>
<gene>
    <name evidence="1" type="primary">ruvB</name>
    <name type="ordered locus">PPA1160</name>
</gene>
<comment type="function">
    <text evidence="1">The RuvA-RuvB-RuvC complex processes Holliday junction (HJ) DNA during genetic recombination and DNA repair, while the RuvA-RuvB complex plays an important role in the rescue of blocked DNA replication forks via replication fork reversal (RFR). RuvA specifically binds to HJ cruciform DNA, conferring on it an open structure. The RuvB hexamer acts as an ATP-dependent pump, pulling dsDNA into and through the RuvAB complex. RuvB forms 2 homohexamers on either side of HJ DNA bound by 1 or 2 RuvA tetramers; 4 subunits per hexamer contact DNA at a time. Coordinated motions by a converter formed by DNA-disengaged RuvB subunits stimulates ATP hydrolysis and nucleotide exchange. Immobilization of the converter enables RuvB to convert the ATP-contained energy into a lever motion, pulling 2 nucleotides of DNA out of the RuvA tetramer per ATP hydrolyzed, thus driving DNA branch migration. The RuvB motors rotate together with the DNA substrate, which together with the progressing nucleotide cycle form the mechanistic basis for DNA recombination by continuous HJ branch migration. Branch migration allows RuvC to scan DNA until it finds its consensus sequence, where it cleaves and resolves cruciform DNA.</text>
</comment>
<comment type="catalytic activity">
    <reaction evidence="1">
        <text>ATP + H2O = ADP + phosphate + H(+)</text>
        <dbReference type="Rhea" id="RHEA:13065"/>
        <dbReference type="ChEBI" id="CHEBI:15377"/>
        <dbReference type="ChEBI" id="CHEBI:15378"/>
        <dbReference type="ChEBI" id="CHEBI:30616"/>
        <dbReference type="ChEBI" id="CHEBI:43474"/>
        <dbReference type="ChEBI" id="CHEBI:456216"/>
    </reaction>
</comment>
<comment type="subunit">
    <text evidence="1">Homohexamer. Forms an RuvA(8)-RuvB(12)-Holliday junction (HJ) complex. HJ DNA is sandwiched between 2 RuvA tetramers; dsDNA enters through RuvA and exits via RuvB. An RuvB hexamer assembles on each DNA strand where it exits the tetramer. Each RuvB hexamer is contacted by two RuvA subunits (via domain III) on 2 adjacent RuvB subunits; this complex drives branch migration. In the full resolvosome a probable DNA-RuvA(4)-RuvB(12)-RuvC(2) complex forms which resolves the HJ.</text>
</comment>
<comment type="subcellular location">
    <subcellularLocation>
        <location evidence="1">Cytoplasm</location>
    </subcellularLocation>
</comment>
<comment type="domain">
    <text evidence="1">Has 3 domains, the large (RuvB-L) and small ATPase (RuvB-S) domains and the C-terminal head (RuvB-H) domain. The head domain binds DNA, while the ATPase domains jointly bind ATP, ADP or are empty depending on the state of the subunit in the translocation cycle. During a single DNA translocation step the structure of each domain remains the same, but their relative positions change.</text>
</comment>
<comment type="similarity">
    <text evidence="1">Belongs to the RuvB family.</text>
</comment>
<organism>
    <name type="scientific">Cutibacterium acnes (strain DSM 16379 / KPA171202)</name>
    <name type="common">Propionibacterium acnes</name>
    <dbReference type="NCBI Taxonomy" id="267747"/>
    <lineage>
        <taxon>Bacteria</taxon>
        <taxon>Bacillati</taxon>
        <taxon>Actinomycetota</taxon>
        <taxon>Actinomycetes</taxon>
        <taxon>Propionibacteriales</taxon>
        <taxon>Propionibacteriaceae</taxon>
        <taxon>Cutibacterium</taxon>
    </lineage>
</organism>
<name>RUVB_CUTAK</name>